<evidence type="ECO:0000250" key="1"/>
<evidence type="ECO:0000255" key="2">
    <source>
        <dbReference type="HAMAP-Rule" id="MF_01057"/>
    </source>
</evidence>
<sequence>MINDVISPEFDENGRALRRIRSFVRRQGRLTKGQQLALDSYWPVMGVEYQAAPVDLNTLFGREAPIVLEIGFGMGTSLVTMATNNPQQNFLGIEVHSPGVGACLSSAHDAGLSNLRIMCHDAVEVLENMIPEASLDMVQLFFPDPWHKARHNKRRIVQTPFVELVKSKLKVGGVFHMATDWQPYAEHMLEVMSGVSGYLNLSEQNDYVPRPDSRPLTKFELRGQRLGHGVWDLMFERKE</sequence>
<reference key="1">
    <citation type="submission" date="2007-02" db="EMBL/GenBank/DDBJ databases">
        <title>Complete sequence of chromosome of Yersinia pestis Pestoides F.</title>
        <authorList>
            <consortium name="US DOE Joint Genome Institute"/>
            <person name="Copeland A."/>
            <person name="Lucas S."/>
            <person name="Lapidus A."/>
            <person name="Barry K."/>
            <person name="Detter J.C."/>
            <person name="Glavina del Rio T."/>
            <person name="Hammon N."/>
            <person name="Israni S."/>
            <person name="Dalin E."/>
            <person name="Tice H."/>
            <person name="Pitluck S."/>
            <person name="Di Bartolo G."/>
            <person name="Chain P."/>
            <person name="Malfatti S."/>
            <person name="Shin M."/>
            <person name="Vergez L."/>
            <person name="Schmutz J."/>
            <person name="Larimer F."/>
            <person name="Land M."/>
            <person name="Hauser L."/>
            <person name="Worsham P."/>
            <person name="Chu M."/>
            <person name="Bearden S."/>
            <person name="Garcia E."/>
            <person name="Richardson P."/>
        </authorList>
    </citation>
    <scope>NUCLEOTIDE SEQUENCE [LARGE SCALE GENOMIC DNA]</scope>
    <source>
        <strain>Pestoides F</strain>
    </source>
</reference>
<proteinExistence type="inferred from homology"/>
<protein>
    <recommendedName>
        <fullName evidence="2">tRNA (guanine-N(7)-)-methyltransferase</fullName>
        <ecNumber evidence="2">2.1.1.33</ecNumber>
    </recommendedName>
    <alternativeName>
        <fullName evidence="2">tRNA (guanine(46)-N(7))-methyltransferase</fullName>
    </alternativeName>
    <alternativeName>
        <fullName evidence="2">tRNA(m7G46)-methyltransferase</fullName>
    </alternativeName>
</protein>
<dbReference type="EC" id="2.1.1.33" evidence="2"/>
<dbReference type="EMBL" id="CP000668">
    <property type="protein sequence ID" value="ABP38973.1"/>
    <property type="molecule type" value="Genomic_DNA"/>
</dbReference>
<dbReference type="RefSeq" id="WP_002209991.1">
    <property type="nucleotide sequence ID" value="NZ_CP009715.1"/>
</dbReference>
<dbReference type="SMR" id="A4TI61"/>
<dbReference type="GeneID" id="57973690"/>
<dbReference type="KEGG" id="ypp:YPDSF_0563"/>
<dbReference type="PATRIC" id="fig|386656.14.peg.1881"/>
<dbReference type="UniPathway" id="UPA00989"/>
<dbReference type="GO" id="GO:0043527">
    <property type="term" value="C:tRNA methyltransferase complex"/>
    <property type="evidence" value="ECO:0007669"/>
    <property type="project" value="TreeGrafter"/>
</dbReference>
<dbReference type="GO" id="GO:0008176">
    <property type="term" value="F:tRNA (guanine(46)-N7)-methyltransferase activity"/>
    <property type="evidence" value="ECO:0007669"/>
    <property type="project" value="UniProtKB-UniRule"/>
</dbReference>
<dbReference type="FunFam" id="3.40.50.150:FF:000024">
    <property type="entry name" value="tRNA (guanine-N(7)-)-methyltransferase"/>
    <property type="match status" value="1"/>
</dbReference>
<dbReference type="Gene3D" id="3.40.50.150">
    <property type="entry name" value="Vaccinia Virus protein VP39"/>
    <property type="match status" value="1"/>
</dbReference>
<dbReference type="HAMAP" id="MF_01057">
    <property type="entry name" value="tRNA_methyltr_TrmB"/>
    <property type="match status" value="1"/>
</dbReference>
<dbReference type="InterPro" id="IPR029063">
    <property type="entry name" value="SAM-dependent_MTases_sf"/>
</dbReference>
<dbReference type="InterPro" id="IPR003358">
    <property type="entry name" value="tRNA_(Gua-N-7)_MeTrfase_Trmb"/>
</dbReference>
<dbReference type="InterPro" id="IPR055361">
    <property type="entry name" value="tRNA_methyltr_TrmB_bact"/>
</dbReference>
<dbReference type="NCBIfam" id="TIGR00091">
    <property type="entry name" value="tRNA (guanosine(46)-N7)-methyltransferase TrmB"/>
    <property type="match status" value="1"/>
</dbReference>
<dbReference type="PANTHER" id="PTHR23417">
    <property type="entry name" value="3-DEOXY-D-MANNO-OCTULOSONIC-ACID TRANSFERASE/TRNA GUANINE-N 7 - -METHYLTRANSFERASE"/>
    <property type="match status" value="1"/>
</dbReference>
<dbReference type="PANTHER" id="PTHR23417:SF14">
    <property type="entry name" value="PENTACOTRIPEPTIDE-REPEAT REGION OF PRORP DOMAIN-CONTAINING PROTEIN"/>
    <property type="match status" value="1"/>
</dbReference>
<dbReference type="Pfam" id="PF02390">
    <property type="entry name" value="Methyltransf_4"/>
    <property type="match status" value="1"/>
</dbReference>
<dbReference type="SUPFAM" id="SSF53335">
    <property type="entry name" value="S-adenosyl-L-methionine-dependent methyltransferases"/>
    <property type="match status" value="1"/>
</dbReference>
<dbReference type="PROSITE" id="PS51625">
    <property type="entry name" value="SAM_MT_TRMB"/>
    <property type="match status" value="1"/>
</dbReference>
<comment type="function">
    <text evidence="2">Catalyzes the formation of N(7)-methylguanine at position 46 (m7G46) in tRNA.</text>
</comment>
<comment type="catalytic activity">
    <reaction evidence="2">
        <text>guanosine(46) in tRNA + S-adenosyl-L-methionine = N(7)-methylguanosine(46) in tRNA + S-adenosyl-L-homocysteine</text>
        <dbReference type="Rhea" id="RHEA:42708"/>
        <dbReference type="Rhea" id="RHEA-COMP:10188"/>
        <dbReference type="Rhea" id="RHEA-COMP:10189"/>
        <dbReference type="ChEBI" id="CHEBI:57856"/>
        <dbReference type="ChEBI" id="CHEBI:59789"/>
        <dbReference type="ChEBI" id="CHEBI:74269"/>
        <dbReference type="ChEBI" id="CHEBI:74480"/>
        <dbReference type="EC" id="2.1.1.33"/>
    </reaction>
</comment>
<comment type="pathway">
    <text evidence="2">tRNA modification; N(7)-methylguanine-tRNA biosynthesis.</text>
</comment>
<comment type="subunit">
    <text evidence="2">Monomer.</text>
</comment>
<comment type="similarity">
    <text evidence="2">Belongs to the class I-like SAM-binding methyltransferase superfamily. TrmB family.</text>
</comment>
<feature type="chain" id="PRO_1000064417" description="tRNA (guanine-N(7)-)-methyltransferase">
    <location>
        <begin position="1"/>
        <end position="239"/>
    </location>
</feature>
<feature type="region of interest" description="Interaction with RNA" evidence="2">
    <location>
        <begin position="150"/>
        <end position="155"/>
    </location>
</feature>
<feature type="active site" evidence="1">
    <location>
        <position position="144"/>
    </location>
</feature>
<feature type="binding site" evidence="2">
    <location>
        <position position="69"/>
    </location>
    <ligand>
        <name>S-adenosyl-L-methionine</name>
        <dbReference type="ChEBI" id="CHEBI:59789"/>
    </ligand>
</feature>
<feature type="binding site" evidence="2">
    <location>
        <position position="94"/>
    </location>
    <ligand>
        <name>S-adenosyl-L-methionine</name>
        <dbReference type="ChEBI" id="CHEBI:59789"/>
    </ligand>
</feature>
<feature type="binding site" evidence="2">
    <location>
        <position position="121"/>
    </location>
    <ligand>
        <name>S-adenosyl-L-methionine</name>
        <dbReference type="ChEBI" id="CHEBI:59789"/>
    </ligand>
</feature>
<feature type="binding site" evidence="2">
    <location>
        <position position="144"/>
    </location>
    <ligand>
        <name>S-adenosyl-L-methionine</name>
        <dbReference type="ChEBI" id="CHEBI:59789"/>
    </ligand>
</feature>
<feature type="binding site" evidence="2">
    <location>
        <position position="148"/>
    </location>
    <ligand>
        <name>substrate</name>
    </ligand>
</feature>
<feature type="binding site" evidence="2">
    <location>
        <position position="180"/>
    </location>
    <ligand>
        <name>substrate</name>
    </ligand>
</feature>
<feature type="binding site" evidence="2">
    <location>
        <begin position="217"/>
        <end position="220"/>
    </location>
    <ligand>
        <name>substrate</name>
    </ligand>
</feature>
<accession>A4TI61</accession>
<organism>
    <name type="scientific">Yersinia pestis (strain Pestoides F)</name>
    <dbReference type="NCBI Taxonomy" id="386656"/>
    <lineage>
        <taxon>Bacteria</taxon>
        <taxon>Pseudomonadati</taxon>
        <taxon>Pseudomonadota</taxon>
        <taxon>Gammaproteobacteria</taxon>
        <taxon>Enterobacterales</taxon>
        <taxon>Yersiniaceae</taxon>
        <taxon>Yersinia</taxon>
    </lineage>
</organism>
<gene>
    <name evidence="2" type="primary">trmB</name>
    <name type="ordered locus">YPDSF_0563</name>
</gene>
<keyword id="KW-0489">Methyltransferase</keyword>
<keyword id="KW-0949">S-adenosyl-L-methionine</keyword>
<keyword id="KW-0808">Transferase</keyword>
<keyword id="KW-0819">tRNA processing</keyword>
<name>TRMB_YERPP</name>